<reference key="1">
    <citation type="journal article" date="2005" name="Science">
        <title>The transcriptional landscape of the mammalian genome.</title>
        <authorList>
            <person name="Carninci P."/>
            <person name="Kasukawa T."/>
            <person name="Katayama S."/>
            <person name="Gough J."/>
            <person name="Frith M.C."/>
            <person name="Maeda N."/>
            <person name="Oyama R."/>
            <person name="Ravasi T."/>
            <person name="Lenhard B."/>
            <person name="Wells C."/>
            <person name="Kodzius R."/>
            <person name="Shimokawa K."/>
            <person name="Bajic V.B."/>
            <person name="Brenner S.E."/>
            <person name="Batalov S."/>
            <person name="Forrest A.R."/>
            <person name="Zavolan M."/>
            <person name="Davis M.J."/>
            <person name="Wilming L.G."/>
            <person name="Aidinis V."/>
            <person name="Allen J.E."/>
            <person name="Ambesi-Impiombato A."/>
            <person name="Apweiler R."/>
            <person name="Aturaliya R.N."/>
            <person name="Bailey T.L."/>
            <person name="Bansal M."/>
            <person name="Baxter L."/>
            <person name="Beisel K.W."/>
            <person name="Bersano T."/>
            <person name="Bono H."/>
            <person name="Chalk A.M."/>
            <person name="Chiu K.P."/>
            <person name="Choudhary V."/>
            <person name="Christoffels A."/>
            <person name="Clutterbuck D.R."/>
            <person name="Crowe M.L."/>
            <person name="Dalla E."/>
            <person name="Dalrymple B.P."/>
            <person name="de Bono B."/>
            <person name="Della Gatta G."/>
            <person name="di Bernardo D."/>
            <person name="Down T."/>
            <person name="Engstrom P."/>
            <person name="Fagiolini M."/>
            <person name="Faulkner G."/>
            <person name="Fletcher C.F."/>
            <person name="Fukushima T."/>
            <person name="Furuno M."/>
            <person name="Futaki S."/>
            <person name="Gariboldi M."/>
            <person name="Georgii-Hemming P."/>
            <person name="Gingeras T.R."/>
            <person name="Gojobori T."/>
            <person name="Green R.E."/>
            <person name="Gustincich S."/>
            <person name="Harbers M."/>
            <person name="Hayashi Y."/>
            <person name="Hensch T.K."/>
            <person name="Hirokawa N."/>
            <person name="Hill D."/>
            <person name="Huminiecki L."/>
            <person name="Iacono M."/>
            <person name="Ikeo K."/>
            <person name="Iwama A."/>
            <person name="Ishikawa T."/>
            <person name="Jakt M."/>
            <person name="Kanapin A."/>
            <person name="Katoh M."/>
            <person name="Kawasawa Y."/>
            <person name="Kelso J."/>
            <person name="Kitamura H."/>
            <person name="Kitano H."/>
            <person name="Kollias G."/>
            <person name="Krishnan S.P."/>
            <person name="Kruger A."/>
            <person name="Kummerfeld S.K."/>
            <person name="Kurochkin I.V."/>
            <person name="Lareau L.F."/>
            <person name="Lazarevic D."/>
            <person name="Lipovich L."/>
            <person name="Liu J."/>
            <person name="Liuni S."/>
            <person name="McWilliam S."/>
            <person name="Madan Babu M."/>
            <person name="Madera M."/>
            <person name="Marchionni L."/>
            <person name="Matsuda H."/>
            <person name="Matsuzawa S."/>
            <person name="Miki H."/>
            <person name="Mignone F."/>
            <person name="Miyake S."/>
            <person name="Morris K."/>
            <person name="Mottagui-Tabar S."/>
            <person name="Mulder N."/>
            <person name="Nakano N."/>
            <person name="Nakauchi H."/>
            <person name="Ng P."/>
            <person name="Nilsson R."/>
            <person name="Nishiguchi S."/>
            <person name="Nishikawa S."/>
            <person name="Nori F."/>
            <person name="Ohara O."/>
            <person name="Okazaki Y."/>
            <person name="Orlando V."/>
            <person name="Pang K.C."/>
            <person name="Pavan W.J."/>
            <person name="Pavesi G."/>
            <person name="Pesole G."/>
            <person name="Petrovsky N."/>
            <person name="Piazza S."/>
            <person name="Reed J."/>
            <person name="Reid J.F."/>
            <person name="Ring B.Z."/>
            <person name="Ringwald M."/>
            <person name="Rost B."/>
            <person name="Ruan Y."/>
            <person name="Salzberg S.L."/>
            <person name="Sandelin A."/>
            <person name="Schneider C."/>
            <person name="Schoenbach C."/>
            <person name="Sekiguchi K."/>
            <person name="Semple C.A."/>
            <person name="Seno S."/>
            <person name="Sessa L."/>
            <person name="Sheng Y."/>
            <person name="Shibata Y."/>
            <person name="Shimada H."/>
            <person name="Shimada K."/>
            <person name="Silva D."/>
            <person name="Sinclair B."/>
            <person name="Sperling S."/>
            <person name="Stupka E."/>
            <person name="Sugiura K."/>
            <person name="Sultana R."/>
            <person name="Takenaka Y."/>
            <person name="Taki K."/>
            <person name="Tammoja K."/>
            <person name="Tan S.L."/>
            <person name="Tang S."/>
            <person name="Taylor M.S."/>
            <person name="Tegner J."/>
            <person name="Teichmann S.A."/>
            <person name="Ueda H.R."/>
            <person name="van Nimwegen E."/>
            <person name="Verardo R."/>
            <person name="Wei C.L."/>
            <person name="Yagi K."/>
            <person name="Yamanishi H."/>
            <person name="Zabarovsky E."/>
            <person name="Zhu S."/>
            <person name="Zimmer A."/>
            <person name="Hide W."/>
            <person name="Bult C."/>
            <person name="Grimmond S.M."/>
            <person name="Teasdale R.D."/>
            <person name="Liu E.T."/>
            <person name="Brusic V."/>
            <person name="Quackenbush J."/>
            <person name="Wahlestedt C."/>
            <person name="Mattick J.S."/>
            <person name="Hume D.A."/>
            <person name="Kai C."/>
            <person name="Sasaki D."/>
            <person name="Tomaru Y."/>
            <person name="Fukuda S."/>
            <person name="Kanamori-Katayama M."/>
            <person name="Suzuki M."/>
            <person name="Aoki J."/>
            <person name="Arakawa T."/>
            <person name="Iida J."/>
            <person name="Imamura K."/>
            <person name="Itoh M."/>
            <person name="Kato T."/>
            <person name="Kawaji H."/>
            <person name="Kawagashira N."/>
            <person name="Kawashima T."/>
            <person name="Kojima M."/>
            <person name="Kondo S."/>
            <person name="Konno H."/>
            <person name="Nakano K."/>
            <person name="Ninomiya N."/>
            <person name="Nishio T."/>
            <person name="Okada M."/>
            <person name="Plessy C."/>
            <person name="Shibata K."/>
            <person name="Shiraki T."/>
            <person name="Suzuki S."/>
            <person name="Tagami M."/>
            <person name="Waki K."/>
            <person name="Watahiki A."/>
            <person name="Okamura-Oho Y."/>
            <person name="Suzuki H."/>
            <person name="Kawai J."/>
            <person name="Hayashizaki Y."/>
        </authorList>
    </citation>
    <scope>NUCLEOTIDE SEQUENCE [LARGE SCALE MRNA] (ISOFORMS 1 AND 2)</scope>
    <source>
        <strain>C57BL/6J</strain>
        <tissue>Spinal cord</tissue>
    </source>
</reference>
<reference key="2">
    <citation type="journal article" date="2009" name="PLoS Biol.">
        <title>Lineage-specific biology revealed by a finished genome assembly of the mouse.</title>
        <authorList>
            <person name="Church D.M."/>
            <person name="Goodstadt L."/>
            <person name="Hillier L.W."/>
            <person name="Zody M.C."/>
            <person name="Goldstein S."/>
            <person name="She X."/>
            <person name="Bult C.J."/>
            <person name="Agarwala R."/>
            <person name="Cherry J.L."/>
            <person name="DiCuccio M."/>
            <person name="Hlavina W."/>
            <person name="Kapustin Y."/>
            <person name="Meric P."/>
            <person name="Maglott D."/>
            <person name="Birtle Z."/>
            <person name="Marques A.C."/>
            <person name="Graves T."/>
            <person name="Zhou S."/>
            <person name="Teague B."/>
            <person name="Potamousis K."/>
            <person name="Churas C."/>
            <person name="Place M."/>
            <person name="Herschleb J."/>
            <person name="Runnheim R."/>
            <person name="Forrest D."/>
            <person name="Amos-Landgraf J."/>
            <person name="Schwartz D.C."/>
            <person name="Cheng Z."/>
            <person name="Lindblad-Toh K."/>
            <person name="Eichler E.E."/>
            <person name="Ponting C.P."/>
        </authorList>
    </citation>
    <scope>NUCLEOTIDE SEQUENCE [LARGE SCALE GENOMIC DNA]</scope>
    <source>
        <strain>C57BL/6J</strain>
    </source>
</reference>
<reference key="3">
    <citation type="journal article" date="2003" name="DNA Res.">
        <title>Prediction of the coding sequences of mouse homologues of KIAA gene: III. The complete nucleotide sequences of 500 mouse KIAA-homologous cDNAs identified by screening of terminal sequences of cDNA clones randomly sampled from size-fractionated libraries.</title>
        <authorList>
            <person name="Okazaki N."/>
            <person name="Kikuno R."/>
            <person name="Ohara R."/>
            <person name="Inamoto S."/>
            <person name="Koseki H."/>
            <person name="Hiraoka S."/>
            <person name="Saga Y."/>
            <person name="Nagase T."/>
            <person name="Ohara O."/>
            <person name="Koga H."/>
        </authorList>
    </citation>
    <scope>NUCLEOTIDE SEQUENCE [LARGE SCALE MRNA] OF 851-2430 (ISOFORM 1)</scope>
    <source>
        <tissue>Embryonic tail</tissue>
    </source>
</reference>
<reference key="4">
    <citation type="journal article" date="2004" name="Genome Res.">
        <title>The status, quality, and expansion of the NIH full-length cDNA project: the Mammalian Gene Collection (MGC).</title>
        <authorList>
            <consortium name="The MGC Project Team"/>
        </authorList>
    </citation>
    <scope>NUCLEOTIDE SEQUENCE [LARGE SCALE MRNA] OF 1932-2430 (ISOFORM 1)</scope>
    <source>
        <strain>FVB/N-3</strain>
        <tissue>Mammary tumor</tissue>
    </source>
</reference>
<reference key="5">
    <citation type="journal article" date="2007" name="Nat. Genet.">
        <title>Mutations in SPG11, encoding spatacsin, are a major cause of spastic paraplegia with thin corpus callosum.</title>
        <authorList>
            <person name="Stevanin G."/>
            <person name="Santorelli F.M."/>
            <person name="Azzedine H."/>
            <person name="Coutinho P."/>
            <person name="Chomilier J."/>
            <person name="Denora P.S."/>
            <person name="Martin E."/>
            <person name="Ouvrard-Hernandez A.-M."/>
            <person name="Tessa A."/>
            <person name="Bouslam N."/>
            <person name="Lossos A."/>
            <person name="Charles P."/>
            <person name="Loureiro J.L."/>
            <person name="Elleuch N."/>
            <person name="Confavreux C."/>
            <person name="Cruz V.T."/>
            <person name="Ruberg M."/>
            <person name="Leguern E."/>
            <person name="Grid D."/>
            <person name="Tazir M."/>
            <person name="Fontaine B."/>
            <person name="Filla A."/>
            <person name="Bertini E."/>
            <person name="Durr A."/>
            <person name="Brice A."/>
        </authorList>
    </citation>
    <scope>TISSUE SPECIFICITY</scope>
</reference>
<reference key="6">
    <citation type="journal article" date="2010" name="Cell">
        <title>A tissue-specific atlas of mouse protein phosphorylation and expression.</title>
        <authorList>
            <person name="Huttlin E.L."/>
            <person name="Jedrychowski M.P."/>
            <person name="Elias J.E."/>
            <person name="Goswami T."/>
            <person name="Rad R."/>
            <person name="Beausoleil S.A."/>
            <person name="Villen J."/>
            <person name="Haas W."/>
            <person name="Sowa M.E."/>
            <person name="Gygi S.P."/>
        </authorList>
    </citation>
    <scope>PHOSPHORYLATION [LARGE SCALE ANALYSIS] AT SER-1942 AND SER-1943</scope>
    <scope>IDENTIFICATION BY MASS SPECTROMETRY [LARGE SCALE ANALYSIS]</scope>
    <source>
        <tissue>Brain</tissue>
        <tissue>Kidney</tissue>
        <tissue>Liver</tissue>
        <tissue>Lung</tissue>
        <tissue>Pancreas</tissue>
        <tissue>Spleen</tissue>
        <tissue>Testis</tissue>
    </source>
</reference>
<reference key="7">
    <citation type="journal article" date="2014" name="Hum. Mol. Genet.">
        <title>Dysfunction of spatacsin leads to axonal pathology in SPG11-linked hereditary spastic paraplegia.</title>
        <authorList>
            <person name="Perez-Branguli F."/>
            <person name="Mishra H.K."/>
            <person name="Prots I."/>
            <person name="Havlicek S."/>
            <person name="Kohl Z."/>
            <person name="Saul D."/>
            <person name="Rummel C."/>
            <person name="Dorca-Arevalo J."/>
            <person name="Regensburger M."/>
            <person name="Graef D."/>
            <person name="Sock E."/>
            <person name="Blasi J."/>
            <person name="Groemer T.W."/>
            <person name="Schloetzer-Schrehardt U."/>
            <person name="Winkler J."/>
            <person name="Winner B."/>
        </authorList>
    </citation>
    <scope>FUNCTION</scope>
    <scope>SUBCELLULAR LOCATION</scope>
    <scope>TISSUE SPECIFICITY</scope>
    <scope>DEVELOPMENTAL STAGE</scope>
</reference>
<protein>
    <recommendedName>
        <fullName>Spatacsin</fullName>
    </recommendedName>
    <alternativeName>
        <fullName>Spastic paraplegia 11 protein homolog</fullName>
    </alternativeName>
</protein>
<comment type="function">
    <text evidence="3">May play a role in neurite plasticity by maintaining cytoskeleton stability and regulating synaptic vesicle transport.</text>
</comment>
<comment type="subunit">
    <text evidence="1">Interacts with AP5Z1, AP5B1, AP5S1 and ZFYVE26.</text>
</comment>
<comment type="subcellular location">
    <subcellularLocation>
        <location evidence="3">Cytoplasm</location>
        <location evidence="3">Cytosol</location>
    </subcellularLocation>
    <subcellularLocation>
        <location evidence="1">Nucleus</location>
    </subcellularLocation>
    <subcellularLocation>
        <location evidence="3">Cell projection</location>
        <location evidence="3">Axon</location>
    </subcellularLocation>
    <subcellularLocation>
        <location evidence="3">Cell projection</location>
        <location evidence="3">Dendrite</location>
    </subcellularLocation>
    <subcellularLocation>
        <location evidence="3">Synapse</location>
    </subcellularLocation>
    <text evidence="3">Mainly cytoplasmic.</text>
</comment>
<comment type="alternative products">
    <event type="alternative splicing"/>
    <isoform>
        <id>Q3UHA3-1</id>
        <name>1</name>
        <sequence type="displayed"/>
    </isoform>
    <isoform>
        <id>Q3UHA3-2</id>
        <name>2</name>
        <sequence type="described" ref="VSP_025485 VSP_025486"/>
    </isoform>
</comment>
<comment type="tissue specificity">
    <text evidence="2 3">Ubiquitously expressed at low level. Expressed in embryonic and adult cortical projection neurons.</text>
</comment>
<comment type="developmental stage">
    <text evidence="3">Expressed in all brain areas analyzed from embryonic (18 dpc) and adult mice.</text>
</comment>
<comment type="sequence caution" evidence="5">
    <conflict type="erroneous initiation">
        <sequence resource="EMBL-CDS" id="AAH19404"/>
    </conflict>
    <text>Truncated N-terminus.</text>
</comment>
<comment type="sequence caution" evidence="5">
    <conflict type="erroneous initiation">
        <sequence resource="EMBL-CDS" id="BAC30307"/>
    </conflict>
    <text>Truncated N-terminus.</text>
</comment>
<name>SPTCS_MOUSE</name>
<sequence>MAAQPGPGSAASPGCAGAMERVLPMLLVRIPAEETAQLGPRAQLHRELEALGSLTAAGSLQVLSLAPGSRGGSSCCLPGPFRQFLWEESQNSTSRDRPKLLVAREDYELLVYEFDLRDGRCDAALLHGCCGRTLQKLTEDQGVSISFKSLRILSFHNNTSLLLINRCLILRVVFPGKEPGVPVLDCLSLPLPAQAADMIIDAQLCERFLFVLSTVGLIYIFNTMDGTQVAQVDLALLREDSEQLEPASVSSFTSLRVSQDLDVLVLVSSASTAVALNLHLYFRQHPGHLLCEGTLEDLPIEGPPGIDEDDLVNSAHNMKLSKVSFQVDRSWRAQLLSLNESVRGSEPEVSCCAPWFQSALRLESLESADHTPTVPTHVFIPGDVPRGRCAFPQKEHVKSSDPGRPWKTMHLSEHEQPTELTCLSVTGFTALFTWAVGATSCTIGLWDLETQSMQCFSLSQKCTPVDIGGDQQLCLALTDDGLSLILFGLTQEEFLNRLMIHGSASTVDSLCHLNGWGRCSIPIHALEAGIENRQLDTVDFFLKSKENLLTPSSQSPAPDQQHPFSSHLYLRQVEEMSPALDLLCSAIRESDSETQSKHFAEQLLHLTLSFLNKQIRELCVHTEELDEHFQKGVAILTSYINELRTFMIKFPWKPGDAIDESDVNEGVVTVKEDRVWEELSFEEVIADAILNNRIPEAQTFFRISGHSAQRLEELVRIGLDLAFDSLKKNNVEEASRLLRNMGFSVEDELLKICFYTTDKNIRDFLVEILKEKECFSEKERRTVDFVHQLEALYSGHFQENAQTQAFPRYWIKEQDCFKHKSVLDTFLKYDKKDEFHKQDHRIALNWAHRWDLQTQECILLRRLSPEEYKARSPEALWRHLTARHDCSSISLWMEEFQTQETESPQQSKWPPLSADIIEQGTCCHSHMRNEILDKLARSGIFLASELEDFERLLLRLSRIGGVMQDSLPVQSYKSRAGCDFHSRFILYCLEHGLQHLLYTYLDYYKLSPGNCPFLEKKELHEAHPWLEFLVQCRQVSSNLTDPKLIFQASLANAQILIPTNQASVSSMLLEGHTLLALATTMYAPGGVSQVIQNEDSENCLKKVDPQLLKVALTPYPKLKAALFPQYTAPSILPSDITLYHLIQSLPPFDPSRLFVWQSANTLAIGDTGSQLPHFSSPDLVSKYAVLERLNYAYYLHHGRPSFAFGTFLVQELIKSKTPKQLIQQVGKEAYTLGLSSFTNPSVGAACVCFLELLGLSSLKLRVDLKMANVILGSKRRDEDARSSFIRESLAEKLSKLADGDRAATEELLVLLEEGVWDSIEQQGFSRLSSESSSQWALVLQFCMLHDRKLSVSYLRECAKANDWLQFLVHSQLHNYHPAEVESLLQYFSPVLQSHLKLASEKLSSGSISRDDSCLQELQKNKGETSNFFEILHRCSDESTSWSWLLAEAVRHRAPILSVLASCVQGASVVSCLCVWIVTSVEDKVAAEAMGHIQISVEDHHWSLKDLSIIWRTVLTRRKSHTLIRGFQLFIKDSPLLLIMEMYELCMFFKNYEKAKVKLLEFQKSLETLDTVAARVLPIIPASWMKDQVCFLLKLMPQQCETQYELGKLLQLFVGTEQLFSDGPDVQKLCLLSQVLKDTPIAISPAVISSYSTENFQRECRSILEKLKADGQFAVARRVAELAALPVDSLLIEQLTQEMQTLTHTPQWSLKQERLGFWKKCHEIFKKNSISKRAASSFFSSQAPEVSEHPAEQGSLEERHLLLTLAGHWLAQEEPVPVEELEGLEKQIWICRVAQHTCGGAEEEAKPSLSQHKLAAAELSFDSLASELSFSKLAALNTSKYLGLNDLPSKTTCENRLKHKEQESLNTLIGQLLDGGCVHEASRVCQYFRFYSQDLVLVLHCRALASAEATMEDLHSEIRALLSSAAQPEDLESPSVPLRKAHSSSSLDSQSFVMVPPTDEVAQNLHTLISKCLHGKNYCRQVLCLYELAKDLGCSYGDVAARDSEAMLRAILASQRPDRCRQAQVFINTQGLEADTVAELVAEEVTRELLTPSEGTGEKQPFNPAEESQTFLQLTALCQDRTLVGMKLLDKIPSVPHGELSCTTELLILAHHCFTFTCHMEGITRVLQAARMLTDNHLAPNEEYGLVVRLLTGIGRYNEMTYIFDLLHQKHYFEVLMRKKLDPTGTLKTALLDYIKRCRPGDSEKHNMIALCFSMCREIGENHEAAACIQLKLIESQPWEESLKDGAQLKQLLLKALTLMLDAAESYAKDSCVRQALHCNRLTKLITLQIHFLNSGQNTMLINLGHQKLMDCIMTLPRFYQASIVAEAYDFVPDWAEVLYQQVILKGDFSYLEEFKQQKLLRPNIFEDISKKYKQHQPTDRVTENLKKLLSYCEDIYLYYKLAYEHKFFEIVNMLLKDPQTGCCLKDMLAG</sequence>
<dbReference type="EMBL" id="AK039286">
    <property type="protein sequence ID" value="BAC30307.1"/>
    <property type="status" value="ALT_INIT"/>
    <property type="molecule type" value="mRNA"/>
</dbReference>
<dbReference type="EMBL" id="AK049236">
    <property type="protein sequence ID" value="BAC33628.1"/>
    <property type="molecule type" value="mRNA"/>
</dbReference>
<dbReference type="EMBL" id="AK049617">
    <property type="protein sequence ID" value="BAC33842.1"/>
    <property type="molecule type" value="mRNA"/>
</dbReference>
<dbReference type="EMBL" id="AK083468">
    <property type="protein sequence ID" value="BAC38926.1"/>
    <property type="molecule type" value="mRNA"/>
</dbReference>
<dbReference type="EMBL" id="AK147500">
    <property type="protein sequence ID" value="BAE27954.1"/>
    <property type="molecule type" value="mRNA"/>
</dbReference>
<dbReference type="EMBL" id="AL845457">
    <property type="status" value="NOT_ANNOTATED_CDS"/>
    <property type="molecule type" value="Genomic_DNA"/>
</dbReference>
<dbReference type="EMBL" id="AK129453">
    <property type="protein sequence ID" value="BAC98263.1"/>
    <property type="molecule type" value="mRNA"/>
</dbReference>
<dbReference type="EMBL" id="BC019404">
    <property type="protein sequence ID" value="AAH19404.1"/>
    <property type="status" value="ALT_INIT"/>
    <property type="molecule type" value="mRNA"/>
</dbReference>
<dbReference type="CCDS" id="CCDS50687.1">
    <molecule id="Q3UHA3-1"/>
</dbReference>
<dbReference type="RefSeq" id="NP_663506.2">
    <molecule id="Q3UHA3-1"/>
    <property type="nucleotide sequence ID" value="NM_145531.2"/>
</dbReference>
<dbReference type="BioGRID" id="229544">
    <property type="interactions" value="1"/>
</dbReference>
<dbReference type="FunCoup" id="Q3UHA3">
    <property type="interactions" value="4275"/>
</dbReference>
<dbReference type="IntAct" id="Q3UHA3">
    <property type="interactions" value="1"/>
</dbReference>
<dbReference type="STRING" id="10090.ENSMUSP00000037543"/>
<dbReference type="iPTMnet" id="Q3UHA3"/>
<dbReference type="PhosphoSitePlus" id="Q3UHA3"/>
<dbReference type="jPOST" id="Q3UHA3"/>
<dbReference type="PaxDb" id="10090-ENSMUSP00000037543"/>
<dbReference type="PeptideAtlas" id="Q3UHA3"/>
<dbReference type="ProteomicsDB" id="257060">
    <molecule id="Q3UHA3-1"/>
</dbReference>
<dbReference type="ProteomicsDB" id="257061">
    <molecule id="Q3UHA3-2"/>
</dbReference>
<dbReference type="Pumba" id="Q3UHA3"/>
<dbReference type="Antibodypedia" id="11596">
    <property type="antibodies" value="84 antibodies from 22 providers"/>
</dbReference>
<dbReference type="Ensembl" id="ENSMUST00000036450.8">
    <molecule id="Q3UHA3-1"/>
    <property type="protein sequence ID" value="ENSMUSP00000037543.8"/>
    <property type="gene ID" value="ENSMUSG00000033396.14"/>
</dbReference>
<dbReference type="GeneID" id="214585"/>
<dbReference type="KEGG" id="mmu:214585"/>
<dbReference type="UCSC" id="uc008mac.2">
    <molecule id="Q3UHA3-1"/>
    <property type="organism name" value="mouse"/>
</dbReference>
<dbReference type="UCSC" id="uc008mad.2">
    <molecule id="Q3UHA3-2"/>
    <property type="organism name" value="mouse"/>
</dbReference>
<dbReference type="AGR" id="MGI:2444989"/>
<dbReference type="CTD" id="80208"/>
<dbReference type="MGI" id="MGI:2444989">
    <property type="gene designation" value="Spg11"/>
</dbReference>
<dbReference type="VEuPathDB" id="HostDB:ENSMUSG00000033396"/>
<dbReference type="eggNOG" id="KOG1884">
    <property type="taxonomic scope" value="Eukaryota"/>
</dbReference>
<dbReference type="GeneTree" id="ENSGT00390000016791"/>
<dbReference type="HOGENOM" id="CLU_001081_0_0_1"/>
<dbReference type="InParanoid" id="Q3UHA3"/>
<dbReference type="OMA" id="ACCLNGP"/>
<dbReference type="OrthoDB" id="2018754at2759"/>
<dbReference type="PhylomeDB" id="Q3UHA3"/>
<dbReference type="TreeFam" id="TF325171"/>
<dbReference type="BioGRID-ORCS" id="214585">
    <property type="hits" value="1 hit in 78 CRISPR screens"/>
</dbReference>
<dbReference type="ChiTaRS" id="Spg11">
    <property type="organism name" value="mouse"/>
</dbReference>
<dbReference type="PRO" id="PR:Q3UHA3"/>
<dbReference type="Proteomes" id="UP000000589">
    <property type="component" value="Chromosome 2"/>
</dbReference>
<dbReference type="RNAct" id="Q3UHA3">
    <property type="molecule type" value="protein"/>
</dbReference>
<dbReference type="Bgee" id="ENSMUSG00000033396">
    <property type="expression patterns" value="Expressed in granulocyte and 78 other cell types or tissues"/>
</dbReference>
<dbReference type="GO" id="GO:0030424">
    <property type="term" value="C:axon"/>
    <property type="evidence" value="ECO:0000314"/>
    <property type="project" value="MGI"/>
</dbReference>
<dbReference type="GO" id="GO:0005737">
    <property type="term" value="C:cytoplasm"/>
    <property type="evidence" value="ECO:0000266"/>
    <property type="project" value="MGI"/>
</dbReference>
<dbReference type="GO" id="GO:0031410">
    <property type="term" value="C:cytoplasmic vesicle"/>
    <property type="evidence" value="ECO:0000266"/>
    <property type="project" value="MGI"/>
</dbReference>
<dbReference type="GO" id="GO:0005829">
    <property type="term" value="C:cytosol"/>
    <property type="evidence" value="ECO:0000314"/>
    <property type="project" value="UniProtKB"/>
</dbReference>
<dbReference type="GO" id="GO:0030425">
    <property type="term" value="C:dendrite"/>
    <property type="evidence" value="ECO:0000314"/>
    <property type="project" value="MGI"/>
</dbReference>
<dbReference type="GO" id="GO:0005783">
    <property type="term" value="C:endoplasmic reticulum"/>
    <property type="evidence" value="ECO:0000314"/>
    <property type="project" value="MGI"/>
</dbReference>
<dbReference type="GO" id="GO:0005730">
    <property type="term" value="C:nucleolus"/>
    <property type="evidence" value="ECO:0007669"/>
    <property type="project" value="Ensembl"/>
</dbReference>
<dbReference type="GO" id="GO:0005886">
    <property type="term" value="C:plasma membrane"/>
    <property type="evidence" value="ECO:0007669"/>
    <property type="project" value="Ensembl"/>
</dbReference>
<dbReference type="GO" id="GO:0045202">
    <property type="term" value="C:synapse"/>
    <property type="evidence" value="ECO:0000315"/>
    <property type="project" value="MGI"/>
</dbReference>
<dbReference type="GO" id="GO:0019901">
    <property type="term" value="F:protein kinase binding"/>
    <property type="evidence" value="ECO:0000266"/>
    <property type="project" value="MGI"/>
</dbReference>
<dbReference type="GO" id="GO:1905037">
    <property type="term" value="P:autophagosome organization"/>
    <property type="evidence" value="ECO:0000266"/>
    <property type="project" value="MGI"/>
</dbReference>
<dbReference type="GO" id="GO:0008088">
    <property type="term" value="P:axo-dendritic transport"/>
    <property type="evidence" value="ECO:0000315"/>
    <property type="project" value="MGI"/>
</dbReference>
<dbReference type="GO" id="GO:0048675">
    <property type="term" value="P:axon extension"/>
    <property type="evidence" value="ECO:0000315"/>
    <property type="project" value="MGI"/>
</dbReference>
<dbReference type="GO" id="GO:0007409">
    <property type="term" value="P:axonogenesis"/>
    <property type="evidence" value="ECO:0000266"/>
    <property type="project" value="MGI"/>
</dbReference>
<dbReference type="GO" id="GO:0007268">
    <property type="term" value="P:chemical synaptic transmission"/>
    <property type="evidence" value="ECO:0000250"/>
    <property type="project" value="UniProtKB"/>
</dbReference>
<dbReference type="GO" id="GO:0033344">
    <property type="term" value="P:cholesterol efflux"/>
    <property type="evidence" value="ECO:0000315"/>
    <property type="project" value="MGI"/>
</dbReference>
<dbReference type="GO" id="GO:0021957">
    <property type="term" value="P:corticospinal tract morphogenesis"/>
    <property type="evidence" value="ECO:0000315"/>
    <property type="project" value="MGI"/>
</dbReference>
<dbReference type="GO" id="GO:0006886">
    <property type="term" value="P:intracellular protein transport"/>
    <property type="evidence" value="ECO:0000315"/>
    <property type="project" value="MGI"/>
</dbReference>
<dbReference type="GO" id="GO:0051668">
    <property type="term" value="P:localization within membrane"/>
    <property type="evidence" value="ECO:0000315"/>
    <property type="project" value="MGI"/>
</dbReference>
<dbReference type="GO" id="GO:0007040">
    <property type="term" value="P:lysosome organization"/>
    <property type="evidence" value="ECO:0000315"/>
    <property type="project" value="MGI"/>
</dbReference>
<dbReference type="GO" id="GO:0007613">
    <property type="term" value="P:memory"/>
    <property type="evidence" value="ECO:0000315"/>
    <property type="project" value="MGI"/>
</dbReference>
<dbReference type="GO" id="GO:0061744">
    <property type="term" value="P:motor behavior"/>
    <property type="evidence" value="ECO:0000315"/>
    <property type="project" value="MGI"/>
</dbReference>
<dbReference type="GO" id="GO:0097049">
    <property type="term" value="P:motor neuron apoptotic process"/>
    <property type="evidence" value="ECO:0000315"/>
    <property type="project" value="MGI"/>
</dbReference>
<dbReference type="GO" id="GO:0007528">
    <property type="term" value="P:neuromuscular junction development"/>
    <property type="evidence" value="ECO:0000315"/>
    <property type="project" value="MGI"/>
</dbReference>
<dbReference type="GO" id="GO:0051402">
    <property type="term" value="P:neuron apoptotic process"/>
    <property type="evidence" value="ECO:0000315"/>
    <property type="project" value="MGI"/>
</dbReference>
<dbReference type="GO" id="GO:0090389">
    <property type="term" value="P:phagosome-lysosome fusion involved in apoptotic cell clearance"/>
    <property type="evidence" value="ECO:0000315"/>
    <property type="project" value="MGI"/>
</dbReference>
<dbReference type="GO" id="GO:0030163">
    <property type="term" value="P:protein catabolic process"/>
    <property type="evidence" value="ECO:0000315"/>
    <property type="project" value="MGI"/>
</dbReference>
<dbReference type="GO" id="GO:0006606">
    <property type="term" value="P:protein import into nucleus"/>
    <property type="evidence" value="ECO:0000315"/>
    <property type="project" value="MGI"/>
</dbReference>
<dbReference type="GO" id="GO:0008104">
    <property type="term" value="P:protein localization"/>
    <property type="evidence" value="ECO:0000315"/>
    <property type="project" value="MGI"/>
</dbReference>
<dbReference type="GO" id="GO:2001256">
    <property type="term" value="P:regulation of store-operated calcium entry"/>
    <property type="evidence" value="ECO:0000315"/>
    <property type="project" value="MGI"/>
</dbReference>
<dbReference type="GO" id="GO:0048167">
    <property type="term" value="P:regulation of synaptic plasticity"/>
    <property type="evidence" value="ECO:0000266"/>
    <property type="project" value="MGI"/>
</dbReference>
<dbReference type="GO" id="GO:0048741">
    <property type="term" value="P:skeletal muscle fiber development"/>
    <property type="evidence" value="ECO:0000315"/>
    <property type="project" value="MGI"/>
</dbReference>
<dbReference type="GO" id="GO:0048489">
    <property type="term" value="P:synaptic vesicle transport"/>
    <property type="evidence" value="ECO:0000250"/>
    <property type="project" value="UniProtKB"/>
</dbReference>
<dbReference type="GO" id="GO:0047496">
    <property type="term" value="P:vesicle transport along microtubule"/>
    <property type="evidence" value="ECO:0000315"/>
    <property type="project" value="MGI"/>
</dbReference>
<dbReference type="GO" id="GO:0090659">
    <property type="term" value="P:walking behavior"/>
    <property type="evidence" value="ECO:0000315"/>
    <property type="project" value="MGI"/>
</dbReference>
<dbReference type="InterPro" id="IPR028103">
    <property type="entry name" value="Spatacsin"/>
</dbReference>
<dbReference type="InterPro" id="IPR028107">
    <property type="entry name" value="Spatacsin_C_dom"/>
</dbReference>
<dbReference type="PANTHER" id="PTHR13650">
    <property type="entry name" value="SPATACSIN"/>
    <property type="match status" value="1"/>
</dbReference>
<dbReference type="PANTHER" id="PTHR13650:SF0">
    <property type="entry name" value="SPATACSIN"/>
    <property type="match status" value="1"/>
</dbReference>
<dbReference type="Pfam" id="PF14649">
    <property type="entry name" value="Spatacsin_C"/>
    <property type="match status" value="1"/>
</dbReference>
<gene>
    <name type="primary">Spg11</name>
    <name type="synonym">Kiaa1840</name>
</gene>
<organism>
    <name type="scientific">Mus musculus</name>
    <name type="common">Mouse</name>
    <dbReference type="NCBI Taxonomy" id="10090"/>
    <lineage>
        <taxon>Eukaryota</taxon>
        <taxon>Metazoa</taxon>
        <taxon>Chordata</taxon>
        <taxon>Craniata</taxon>
        <taxon>Vertebrata</taxon>
        <taxon>Euteleostomi</taxon>
        <taxon>Mammalia</taxon>
        <taxon>Eutheria</taxon>
        <taxon>Euarchontoglires</taxon>
        <taxon>Glires</taxon>
        <taxon>Rodentia</taxon>
        <taxon>Myomorpha</taxon>
        <taxon>Muroidea</taxon>
        <taxon>Muridae</taxon>
        <taxon>Murinae</taxon>
        <taxon>Mus</taxon>
        <taxon>Mus</taxon>
    </lineage>
</organism>
<accession>Q3UHA3</accession>
<accession>A2ARM0</accession>
<accession>Q6ZPH3</accession>
<accession>Q8BHQ1</accession>
<accession>Q8C7R3</accession>
<accession>Q8C7U2</accession>
<accession>Q8CA88</accession>
<accession>Q8VEA5</accession>
<evidence type="ECO:0000250" key="1">
    <source>
        <dbReference type="UniProtKB" id="Q96JI7"/>
    </source>
</evidence>
<evidence type="ECO:0000269" key="2">
    <source>
    </source>
</evidence>
<evidence type="ECO:0000269" key="3">
    <source>
    </source>
</evidence>
<evidence type="ECO:0000303" key="4">
    <source>
    </source>
</evidence>
<evidence type="ECO:0000305" key="5"/>
<evidence type="ECO:0007744" key="6">
    <source>
    </source>
</evidence>
<keyword id="KW-0025">Alternative splicing</keyword>
<keyword id="KW-0966">Cell projection</keyword>
<keyword id="KW-0963">Cytoplasm</keyword>
<keyword id="KW-0539">Nucleus</keyword>
<keyword id="KW-0597">Phosphoprotein</keyword>
<keyword id="KW-1185">Reference proteome</keyword>
<keyword id="KW-0770">Synapse</keyword>
<proteinExistence type="evidence at protein level"/>
<feature type="chain" id="PRO_0000287468" description="Spatacsin">
    <location>
        <begin position="1"/>
        <end position="2430"/>
    </location>
</feature>
<feature type="modified residue" description="Phosphoserine" evidence="6">
    <location>
        <position position="1942"/>
    </location>
</feature>
<feature type="modified residue" description="Phosphoserine" evidence="6">
    <location>
        <position position="1943"/>
    </location>
</feature>
<feature type="splice variant" id="VSP_025485" description="In isoform 2." evidence="4">
    <original>DDGLSLILFGLTQEEFLN</original>
    <variation>GEQAVSDGRTLRRGVTAL</variation>
    <location>
        <begin position="479"/>
        <end position="496"/>
    </location>
</feature>
<feature type="splice variant" id="VSP_025486" description="In isoform 2." evidence="4">
    <location>
        <begin position="497"/>
        <end position="2430"/>
    </location>
</feature>
<feature type="sequence conflict" description="In Ref. 1; BAE27954." evidence="5" ref="1">
    <original>A</original>
    <variation>S</variation>
    <location>
        <position position="579"/>
    </location>
</feature>
<feature type="sequence conflict" description="In Ref. 3; BAC98263." evidence="5" ref="3">
    <original>Q</original>
    <variation>K</variation>
    <location>
        <position position="853"/>
    </location>
</feature>
<feature type="sequence conflict" description="In Ref. 3; BAC98263." evidence="5" ref="3">
    <original>N</original>
    <variation>H</variation>
    <location>
        <position position="929"/>
    </location>
</feature>
<feature type="sequence conflict" description="In Ref. 3; BAC98263." evidence="5" ref="3">
    <original>N</original>
    <variation>D</variation>
    <location>
        <position position="1426"/>
    </location>
</feature>
<feature type="sequence conflict" description="In Ref. 3; BAC98263." evidence="5" ref="3">
    <original>G</original>
    <variation>D</variation>
    <location>
        <position position="1715"/>
    </location>
</feature>
<feature type="sequence conflict" description="In Ref. 1; BAE27954." evidence="5" ref="1">
    <original>D</original>
    <variation>G</variation>
    <location>
        <position position="2192"/>
    </location>
</feature>
<feature type="sequence conflict" description="In Ref. 1; BAE27954." evidence="5" ref="1">
    <original>Y</original>
    <variation>C</variation>
    <location>
        <position position="2266"/>
    </location>
</feature>